<organism>
    <name type="scientific">Rattus norvegicus</name>
    <name type="common">Rat</name>
    <dbReference type="NCBI Taxonomy" id="10116"/>
    <lineage>
        <taxon>Eukaryota</taxon>
        <taxon>Metazoa</taxon>
        <taxon>Chordata</taxon>
        <taxon>Craniata</taxon>
        <taxon>Vertebrata</taxon>
        <taxon>Euteleostomi</taxon>
        <taxon>Mammalia</taxon>
        <taxon>Eutheria</taxon>
        <taxon>Euarchontoglires</taxon>
        <taxon>Glires</taxon>
        <taxon>Rodentia</taxon>
        <taxon>Myomorpha</taxon>
        <taxon>Muroidea</taxon>
        <taxon>Muridae</taxon>
        <taxon>Murinae</taxon>
        <taxon>Rattus</taxon>
    </lineage>
</organism>
<name>BL1S2_RAT</name>
<accession>Q32WR5</accession>
<gene>
    <name type="primary">Bloc1s2</name>
    <name type="synonym">Rsep1</name>
    <name type="synonym">Sep1</name>
</gene>
<feature type="initiator methionine" description="Removed" evidence="1">
    <location>
        <position position="1"/>
    </location>
</feature>
<feature type="chain" id="PRO_0000234546" description="Biogenesis of lysosome-related organelles complex-1 subunit 2">
    <location>
        <begin position="2"/>
        <end position="142"/>
    </location>
</feature>
<feature type="region of interest" description="Disordered" evidence="4">
    <location>
        <begin position="1"/>
        <end position="33"/>
    </location>
</feature>
<feature type="coiled-coil region" evidence="3">
    <location>
        <begin position="79"/>
        <end position="127"/>
    </location>
</feature>
<feature type="compositionally biased region" description="Basic and acidic residues" evidence="4">
    <location>
        <begin position="11"/>
        <end position="33"/>
    </location>
</feature>
<feature type="modified residue" description="N-acetylalanine" evidence="1">
    <location>
        <position position="2"/>
    </location>
</feature>
<reference key="1">
    <citation type="journal article" date="2005" name="Eur. J. Neurosci.">
        <title>RSEP1 is a novel gene with functional involvement in neuropathic pain behaviour.</title>
        <authorList>
            <person name="Wang X."/>
            <person name="Zhang Y."/>
            <person name="Kong L."/>
            <person name="Xie Z."/>
            <person name="Lin Z."/>
            <person name="Guo N."/>
            <person name="Strong J.A."/>
            <person name="Meij J.T.A."/>
            <person name="Zhao Z."/>
            <person name="Jing N."/>
            <person name="Yu L."/>
        </authorList>
    </citation>
    <scope>NUCLEOTIDE SEQUENCE [MRNA]</scope>
    <scope>TISSUE SPECIFICITY</scope>
    <scope>INDUCTION</scope>
    <source>
        <strain>Sprague-Dawley</strain>
        <tissue>Spinal cord</tissue>
    </source>
</reference>
<protein>
    <recommendedName>
        <fullName>Biogenesis of lysosome-related organelles complex-1 subunit 2</fullName>
        <shortName>BLOC-1 subunit 2</shortName>
    </recommendedName>
    <alternativeName>
        <fullName>Spinal cord-expressed protein 1</fullName>
    </alternativeName>
</protein>
<comment type="function">
    <text evidence="1 2">Component of the BLOC-1 complex, a complex that is required for normal biogenesis of lysosome-related organelles (LRO), such as platelet dense granules and melanosomes. In concert with the AP-3 complex, the BLOC-1 complex is required to target membrane protein cargos into vesicles assembled at cell bodies for delivery into neurites and nerve terminals. The BLOC-1 complex, in association with SNARE proteins, is also proposed to be involved in neurite extension. As part of the BORC complex may play a role in lysosomes movement and localization at the cell periphery. Associated with the cytosolic face of lysosomes, the BORC complex may recruit ARL8B and couple lysosomes to microtubule plus-end-directed kinesin motor. May play a role in cell proliferation.</text>
</comment>
<comment type="subunit">
    <text evidence="1 2">Component of the biogenesis of lysosome-related organelles complex 1 (BLOC-1) composed of BLOC1S1, BLOC1S2, BLOC1S3, BLOC1S4, BLOC1S5, BLOC1S6, DTNBP1/BLOC1S7 and SNAPIN/BLOC1S8. Octamer composed of one copy each BLOC1S1, BLOC1S2, BLOC1S3, BLOC1S4, BLOC1S5, BLOC1S6, DTNBP1/BLOC1S7 and SNAPIN/BLOC1S8. Interacts directly with BLOC1S1, BLOC1S3, BLOC1S4, BLOC1S5 and SNAPIN. The BLOC-1 complex associates with the AP-3 protein complex and membrane protein cargos. Component of the BLOC-one-related complex (BORC) which is composed of BLOC1S1, BLOC1S2, BORCS5, BORCS6, BORCS7, BORCS8, KXD1 and SNAPIN. Interacts with gamma-tubulin. Interacts with IFT57.</text>
</comment>
<comment type="subcellular location">
    <subcellularLocation>
        <location evidence="1">Cytoplasm</location>
        <location evidence="1">Cytoskeleton</location>
        <location evidence="1">Microtubule organizing center</location>
        <location evidence="1">Centrosome</location>
    </subcellularLocation>
    <subcellularLocation>
        <location evidence="1">Lysosome membrane</location>
    </subcellularLocation>
    <text evidence="1">Localizes to the centrosomes in a microtubule-dependent manner.</text>
</comment>
<comment type="tissue specificity">
    <text evidence="5">Widely expressed. Highly expressed in most brain regions, spinal cord, kidney and ovary. In the brain, expressed in the frontal cortex and the superior thalamic radiation, with the strongest expression in the granule cells of hippocampal CA1, CA3 and dentate gyrus regions. In the spinal cord, mainly expressed in the gray matter. Expression level is high in laminae I-II and V-VI small sensory neurons in the dorsal horn, as well as in the large motor neurons of the ventral horn.</text>
</comment>
<comment type="induction">
    <text evidence="5">Overexpressed in injured nerves.</text>
</comment>
<comment type="similarity">
    <text evidence="6">Belongs to the BLOC1S2 family.</text>
</comment>
<dbReference type="EMBL" id="AY786315">
    <property type="protein sequence ID" value="AAX11391.1"/>
    <property type="molecule type" value="mRNA"/>
</dbReference>
<dbReference type="RefSeq" id="NP_001032426.1">
    <property type="nucleotide sequence ID" value="NM_001037349.2"/>
</dbReference>
<dbReference type="SMR" id="Q32WR5"/>
<dbReference type="BioGRID" id="254515">
    <property type="interactions" value="1"/>
</dbReference>
<dbReference type="FunCoup" id="Q32WR5">
    <property type="interactions" value="1392"/>
</dbReference>
<dbReference type="STRING" id="10116.ENSRNOP00000068679"/>
<dbReference type="iPTMnet" id="Q32WR5"/>
<dbReference type="PhosphoSitePlus" id="Q32WR5"/>
<dbReference type="PaxDb" id="10116-ENSRNOP00000017006"/>
<dbReference type="GeneID" id="293938"/>
<dbReference type="KEGG" id="rno:293938"/>
<dbReference type="UCSC" id="RGD:1306551">
    <property type="organism name" value="rat"/>
</dbReference>
<dbReference type="AGR" id="RGD:1306551"/>
<dbReference type="CTD" id="282991"/>
<dbReference type="RGD" id="1306551">
    <property type="gene designation" value="Bloc1s2"/>
</dbReference>
<dbReference type="VEuPathDB" id="HostDB:ENSRNOG00000012684"/>
<dbReference type="eggNOG" id="KOG4559">
    <property type="taxonomic scope" value="Eukaryota"/>
</dbReference>
<dbReference type="InParanoid" id="Q32WR5"/>
<dbReference type="OrthoDB" id="66493at9989"/>
<dbReference type="PRO" id="PR:Q32WR5"/>
<dbReference type="Proteomes" id="UP000002494">
    <property type="component" value="Chromosome 1"/>
</dbReference>
<dbReference type="Bgee" id="ENSRNOG00000012684">
    <property type="expression patterns" value="Expressed in thymus and 20 other cell types or tissues"/>
</dbReference>
<dbReference type="ExpressionAtlas" id="Q32WR5">
    <property type="expression patterns" value="baseline and differential"/>
</dbReference>
<dbReference type="GO" id="GO:1904115">
    <property type="term" value="C:axon cytoplasm"/>
    <property type="evidence" value="ECO:0007669"/>
    <property type="project" value="GOC"/>
</dbReference>
<dbReference type="GO" id="GO:0031083">
    <property type="term" value="C:BLOC-1 complex"/>
    <property type="evidence" value="ECO:0000250"/>
    <property type="project" value="UniProtKB"/>
</dbReference>
<dbReference type="GO" id="GO:0099078">
    <property type="term" value="C:BORC complex"/>
    <property type="evidence" value="ECO:0000250"/>
    <property type="project" value="UniProtKB"/>
</dbReference>
<dbReference type="GO" id="GO:0005813">
    <property type="term" value="C:centrosome"/>
    <property type="evidence" value="ECO:0000314"/>
    <property type="project" value="RGD"/>
</dbReference>
<dbReference type="GO" id="GO:0005829">
    <property type="term" value="C:cytosol"/>
    <property type="evidence" value="ECO:0000266"/>
    <property type="project" value="RGD"/>
</dbReference>
<dbReference type="GO" id="GO:0000930">
    <property type="term" value="C:gamma-tubulin complex"/>
    <property type="evidence" value="ECO:0000266"/>
    <property type="project" value="RGD"/>
</dbReference>
<dbReference type="GO" id="GO:0005765">
    <property type="term" value="C:lysosomal membrane"/>
    <property type="evidence" value="ECO:0007669"/>
    <property type="project" value="UniProtKB-SubCell"/>
</dbReference>
<dbReference type="GO" id="GO:0005739">
    <property type="term" value="C:mitochondrion"/>
    <property type="evidence" value="ECO:0000250"/>
    <property type="project" value="UniProtKB"/>
</dbReference>
<dbReference type="GO" id="GO:0055037">
    <property type="term" value="C:recycling endosome"/>
    <property type="evidence" value="ECO:0000314"/>
    <property type="project" value="RGD"/>
</dbReference>
<dbReference type="GO" id="GO:0043015">
    <property type="term" value="F:gamma-tubulin binding"/>
    <property type="evidence" value="ECO:0000266"/>
    <property type="project" value="RGD"/>
</dbReference>
<dbReference type="GO" id="GO:0008089">
    <property type="term" value="P:anterograde axonal transport"/>
    <property type="evidence" value="ECO:0000250"/>
    <property type="project" value="UniProtKB"/>
</dbReference>
<dbReference type="GO" id="GO:0048490">
    <property type="term" value="P:anterograde synaptic vesicle transport"/>
    <property type="evidence" value="ECO:0000250"/>
    <property type="project" value="UniProtKB"/>
</dbReference>
<dbReference type="GO" id="GO:0016197">
    <property type="term" value="P:endosomal transport"/>
    <property type="evidence" value="ECO:0000318"/>
    <property type="project" value="GO_Central"/>
</dbReference>
<dbReference type="GO" id="GO:0008625">
    <property type="term" value="P:extrinsic apoptotic signaling pathway via death domain receptors"/>
    <property type="evidence" value="ECO:0000250"/>
    <property type="project" value="UniProtKB"/>
</dbReference>
<dbReference type="GO" id="GO:0032418">
    <property type="term" value="P:lysosome localization"/>
    <property type="evidence" value="ECO:0000250"/>
    <property type="project" value="UniProtKB"/>
</dbReference>
<dbReference type="GO" id="GO:0097345">
    <property type="term" value="P:mitochondrial outer membrane permeabilization"/>
    <property type="evidence" value="ECO:0000250"/>
    <property type="project" value="UniProtKB"/>
</dbReference>
<dbReference type="GO" id="GO:0031175">
    <property type="term" value="P:neuron projection development"/>
    <property type="evidence" value="ECO:0000250"/>
    <property type="project" value="UniProtKB"/>
</dbReference>
<dbReference type="GO" id="GO:0008284">
    <property type="term" value="P:positive regulation of cell population proliferation"/>
    <property type="evidence" value="ECO:0000266"/>
    <property type="project" value="RGD"/>
</dbReference>
<dbReference type="GO" id="GO:0045944">
    <property type="term" value="P:positive regulation of transcription by RNA polymerase II"/>
    <property type="evidence" value="ECO:0000315"/>
    <property type="project" value="RGD"/>
</dbReference>
<dbReference type="InterPro" id="IPR019269">
    <property type="entry name" value="BLOC1_su2"/>
</dbReference>
<dbReference type="PANTHER" id="PTHR46479">
    <property type="entry name" value="BIOGENESIS OF LYSOSOME-RELATED ORGANELLES COMPLEX 1 SUBUNIT 2"/>
    <property type="match status" value="1"/>
</dbReference>
<dbReference type="PANTHER" id="PTHR46479:SF1">
    <property type="entry name" value="BIOGENESIS OF LYSOSOME-RELATED ORGANELLES COMPLEX 1 SUBUNIT 2"/>
    <property type="match status" value="1"/>
</dbReference>
<dbReference type="Pfam" id="PF10046">
    <property type="entry name" value="BLOC1_2"/>
    <property type="match status" value="1"/>
</dbReference>
<proteinExistence type="evidence at transcript level"/>
<evidence type="ECO:0000250" key="1">
    <source>
        <dbReference type="UniProtKB" id="Q6QNY1"/>
    </source>
</evidence>
<evidence type="ECO:0000250" key="2">
    <source>
        <dbReference type="UniProtKB" id="Q9CWG9"/>
    </source>
</evidence>
<evidence type="ECO:0000255" key="3"/>
<evidence type="ECO:0000256" key="4">
    <source>
        <dbReference type="SAM" id="MobiDB-lite"/>
    </source>
</evidence>
<evidence type="ECO:0000269" key="5">
    <source>
    </source>
</evidence>
<evidence type="ECO:0000305" key="6"/>
<sequence>MAAAAEGVPATRREEPPRDDAAVETAEEAKEPAEADINELCRDMFSKMATYLTGELTATSEDYKLLENMNKLTSLKYLEMKDIAINISRNLKDLNQKYAGLQPYLDQINVIEEQVAALEQAAYKLDAYSKKLEAKYKKLEKR</sequence>
<keyword id="KW-0007">Acetylation</keyword>
<keyword id="KW-0175">Coiled coil</keyword>
<keyword id="KW-0963">Cytoplasm</keyword>
<keyword id="KW-0206">Cytoskeleton</keyword>
<keyword id="KW-0458">Lysosome</keyword>
<keyword id="KW-0472">Membrane</keyword>
<keyword id="KW-1185">Reference proteome</keyword>